<name>Y2075_ACET2</name>
<comment type="subcellular location">
    <subcellularLocation>
        <location evidence="1">Cytoplasm</location>
    </subcellularLocation>
</comment>
<comment type="similarity">
    <text evidence="1">Belongs to the TACO1 family.</text>
</comment>
<accession>A3DH53</accession>
<keyword id="KW-0963">Cytoplasm</keyword>
<keyword id="KW-0238">DNA-binding</keyword>
<keyword id="KW-1185">Reference proteome</keyword>
<keyword id="KW-0804">Transcription</keyword>
<keyword id="KW-0805">Transcription regulation</keyword>
<protein>
    <recommendedName>
        <fullName evidence="1">Probable transcriptional regulatory protein Cthe_2075</fullName>
    </recommendedName>
</protein>
<evidence type="ECO:0000255" key="1">
    <source>
        <dbReference type="HAMAP-Rule" id="MF_00693"/>
    </source>
</evidence>
<feature type="chain" id="PRO_1000045302" description="Probable transcriptional regulatory protein Cthe_2075">
    <location>
        <begin position="1"/>
        <end position="242"/>
    </location>
</feature>
<organism>
    <name type="scientific">Acetivibrio thermocellus (strain ATCC 27405 / DSM 1237 / JCM 9322 / NBRC 103400 / NCIMB 10682 / NRRL B-4536 / VPI 7372)</name>
    <name type="common">Clostridium thermocellum</name>
    <dbReference type="NCBI Taxonomy" id="203119"/>
    <lineage>
        <taxon>Bacteria</taxon>
        <taxon>Bacillati</taxon>
        <taxon>Bacillota</taxon>
        <taxon>Clostridia</taxon>
        <taxon>Eubacteriales</taxon>
        <taxon>Oscillospiraceae</taxon>
        <taxon>Acetivibrio</taxon>
    </lineage>
</organism>
<gene>
    <name type="ordered locus">Cthe_2075</name>
</gene>
<proteinExistence type="inferred from homology"/>
<dbReference type="EMBL" id="CP000568">
    <property type="protein sequence ID" value="ABN53282.1"/>
    <property type="molecule type" value="Genomic_DNA"/>
</dbReference>
<dbReference type="RefSeq" id="WP_003514158.1">
    <property type="nucleotide sequence ID" value="NC_009012.1"/>
</dbReference>
<dbReference type="SMR" id="A3DH53"/>
<dbReference type="STRING" id="203119.Cthe_2075"/>
<dbReference type="GeneID" id="35803111"/>
<dbReference type="KEGG" id="cth:Cthe_2075"/>
<dbReference type="eggNOG" id="COG0217">
    <property type="taxonomic scope" value="Bacteria"/>
</dbReference>
<dbReference type="HOGENOM" id="CLU_062974_2_2_9"/>
<dbReference type="OrthoDB" id="9781053at2"/>
<dbReference type="Proteomes" id="UP000002145">
    <property type="component" value="Chromosome"/>
</dbReference>
<dbReference type="GO" id="GO:0005829">
    <property type="term" value="C:cytosol"/>
    <property type="evidence" value="ECO:0007669"/>
    <property type="project" value="TreeGrafter"/>
</dbReference>
<dbReference type="GO" id="GO:0003677">
    <property type="term" value="F:DNA binding"/>
    <property type="evidence" value="ECO:0007669"/>
    <property type="project" value="UniProtKB-UniRule"/>
</dbReference>
<dbReference type="GO" id="GO:0006355">
    <property type="term" value="P:regulation of DNA-templated transcription"/>
    <property type="evidence" value="ECO:0007669"/>
    <property type="project" value="UniProtKB-UniRule"/>
</dbReference>
<dbReference type="FunFam" id="1.10.10.200:FF:000002">
    <property type="entry name" value="Probable transcriptional regulatory protein CLM62_37755"/>
    <property type="match status" value="1"/>
</dbReference>
<dbReference type="FunFam" id="3.30.70.980:FF:000002">
    <property type="entry name" value="Probable transcriptional regulatory protein YebC"/>
    <property type="match status" value="1"/>
</dbReference>
<dbReference type="Gene3D" id="1.10.10.200">
    <property type="match status" value="1"/>
</dbReference>
<dbReference type="Gene3D" id="3.30.70.980">
    <property type="match status" value="2"/>
</dbReference>
<dbReference type="HAMAP" id="MF_00693">
    <property type="entry name" value="Transcrip_reg_TACO1"/>
    <property type="match status" value="1"/>
</dbReference>
<dbReference type="InterPro" id="IPR017856">
    <property type="entry name" value="Integrase-like_N"/>
</dbReference>
<dbReference type="InterPro" id="IPR048300">
    <property type="entry name" value="TACO1_YebC-like_2nd/3rd_dom"/>
</dbReference>
<dbReference type="InterPro" id="IPR049083">
    <property type="entry name" value="TACO1_YebC_N"/>
</dbReference>
<dbReference type="InterPro" id="IPR002876">
    <property type="entry name" value="Transcrip_reg_TACO1-like"/>
</dbReference>
<dbReference type="InterPro" id="IPR026564">
    <property type="entry name" value="Transcrip_reg_TACO1-like_dom3"/>
</dbReference>
<dbReference type="InterPro" id="IPR029072">
    <property type="entry name" value="YebC-like"/>
</dbReference>
<dbReference type="NCBIfam" id="NF001030">
    <property type="entry name" value="PRK00110.1"/>
    <property type="match status" value="1"/>
</dbReference>
<dbReference type="NCBIfam" id="NF009044">
    <property type="entry name" value="PRK12378.1"/>
    <property type="match status" value="1"/>
</dbReference>
<dbReference type="NCBIfam" id="TIGR01033">
    <property type="entry name" value="YebC/PmpR family DNA-binding transcriptional regulator"/>
    <property type="match status" value="1"/>
</dbReference>
<dbReference type="PANTHER" id="PTHR12532:SF6">
    <property type="entry name" value="TRANSCRIPTIONAL REGULATORY PROTEIN YEBC-RELATED"/>
    <property type="match status" value="1"/>
</dbReference>
<dbReference type="PANTHER" id="PTHR12532">
    <property type="entry name" value="TRANSLATIONAL ACTIVATOR OF CYTOCHROME C OXIDASE 1"/>
    <property type="match status" value="1"/>
</dbReference>
<dbReference type="Pfam" id="PF20772">
    <property type="entry name" value="TACO1_YebC_N"/>
    <property type="match status" value="1"/>
</dbReference>
<dbReference type="Pfam" id="PF01709">
    <property type="entry name" value="Transcrip_reg"/>
    <property type="match status" value="1"/>
</dbReference>
<dbReference type="SUPFAM" id="SSF75625">
    <property type="entry name" value="YebC-like"/>
    <property type="match status" value="1"/>
</dbReference>
<reference key="1">
    <citation type="submission" date="2007-02" db="EMBL/GenBank/DDBJ databases">
        <title>Complete sequence of Clostridium thermocellum ATCC 27405.</title>
        <authorList>
            <consortium name="US DOE Joint Genome Institute"/>
            <person name="Copeland A."/>
            <person name="Lucas S."/>
            <person name="Lapidus A."/>
            <person name="Barry K."/>
            <person name="Detter J.C."/>
            <person name="Glavina del Rio T."/>
            <person name="Hammon N."/>
            <person name="Israni S."/>
            <person name="Dalin E."/>
            <person name="Tice H."/>
            <person name="Pitluck S."/>
            <person name="Chertkov O."/>
            <person name="Brettin T."/>
            <person name="Bruce D."/>
            <person name="Han C."/>
            <person name="Tapia R."/>
            <person name="Gilna P."/>
            <person name="Schmutz J."/>
            <person name="Larimer F."/>
            <person name="Land M."/>
            <person name="Hauser L."/>
            <person name="Kyrpides N."/>
            <person name="Mikhailova N."/>
            <person name="Wu J.H.D."/>
            <person name="Newcomb M."/>
            <person name="Richardson P."/>
        </authorList>
    </citation>
    <scope>NUCLEOTIDE SEQUENCE [LARGE SCALE GENOMIC DNA]</scope>
    <source>
        <strain>ATCC 27405 / DSM 1237 / JCM 9322 / NBRC 103400 / NCIMB 10682 / NRRL B-4536 / VPI 7372</strain>
    </source>
</reference>
<sequence length="242" mass="26990">MAGHSKWANIKHKKQKTDAQKGKIFTKIGREIAIVVKQGGPDPEVNSKLKDVIAKAKAANMPNETIMRSIKKAAGEVDSTNYEEVVYEGYGPGGVAVIVEATTDNRNRTAGEVRHLFDKFGGNLGTTGCVSFMFDKKGVILIEKSDKVNEDDLMMKALDLGAEDFTAEDEYFEIITAPEDFSKVREGLEKEGYEFVEAEVEMVPQTTTTLTDPKHIEFMNKLIDSLEDLDDVQNVYHNWYGE</sequence>